<dbReference type="EC" id="2.1.1.195" evidence="1"/>
<dbReference type="EMBL" id="AL513382">
    <property type="protein sequence ID" value="CAD02393.1"/>
    <property type="molecule type" value="Genomic_DNA"/>
</dbReference>
<dbReference type="EMBL" id="AE014613">
    <property type="protein sequence ID" value="AAO68529.1"/>
    <property type="molecule type" value="Genomic_DNA"/>
</dbReference>
<dbReference type="RefSeq" id="NP_456583.1">
    <property type="nucleotide sequence ID" value="NC_003198.1"/>
</dbReference>
<dbReference type="RefSeq" id="WP_001292925.1">
    <property type="nucleotide sequence ID" value="NZ_WSUR01000002.1"/>
</dbReference>
<dbReference type="SMR" id="Q8Z5M8"/>
<dbReference type="STRING" id="220341.gene:17586148"/>
<dbReference type="KEGG" id="stt:t0842"/>
<dbReference type="KEGG" id="sty:STY2237"/>
<dbReference type="PATRIC" id="fig|220341.7.peg.2256"/>
<dbReference type="eggNOG" id="COG1903">
    <property type="taxonomic scope" value="Bacteria"/>
</dbReference>
<dbReference type="HOGENOM" id="CLU_041273_1_0_6"/>
<dbReference type="OMA" id="FHTHHHL"/>
<dbReference type="OrthoDB" id="6439987at2"/>
<dbReference type="UniPathway" id="UPA00148">
    <property type="reaction ID" value="UER00227"/>
</dbReference>
<dbReference type="Proteomes" id="UP000000541">
    <property type="component" value="Chromosome"/>
</dbReference>
<dbReference type="Proteomes" id="UP000002670">
    <property type="component" value="Chromosome"/>
</dbReference>
<dbReference type="GO" id="GO:0043780">
    <property type="term" value="F:cobalt-precorrin-5B C1-methyltransferase activity"/>
    <property type="evidence" value="ECO:0007669"/>
    <property type="project" value="RHEA"/>
</dbReference>
<dbReference type="GO" id="GO:0019251">
    <property type="term" value="P:anaerobic cobalamin biosynthetic process"/>
    <property type="evidence" value="ECO:0007669"/>
    <property type="project" value="UniProtKB-UniRule"/>
</dbReference>
<dbReference type="GO" id="GO:0032259">
    <property type="term" value="P:methylation"/>
    <property type="evidence" value="ECO:0007669"/>
    <property type="project" value="UniProtKB-KW"/>
</dbReference>
<dbReference type="Gene3D" id="3.30.2110.10">
    <property type="entry name" value="CbiD-like"/>
    <property type="match status" value="1"/>
</dbReference>
<dbReference type="HAMAP" id="MF_00787">
    <property type="entry name" value="CbiD"/>
    <property type="match status" value="1"/>
</dbReference>
<dbReference type="InterPro" id="IPR002748">
    <property type="entry name" value="CbiD"/>
</dbReference>
<dbReference type="InterPro" id="IPR036074">
    <property type="entry name" value="CbiD_sf"/>
</dbReference>
<dbReference type="NCBIfam" id="TIGR00312">
    <property type="entry name" value="cbiD"/>
    <property type="match status" value="1"/>
</dbReference>
<dbReference type="PANTHER" id="PTHR35863">
    <property type="entry name" value="COBALT-PRECORRIN-5B C(1)-METHYLTRANSFERASE"/>
    <property type="match status" value="1"/>
</dbReference>
<dbReference type="PANTHER" id="PTHR35863:SF1">
    <property type="entry name" value="COBALT-PRECORRIN-5B C(1)-METHYLTRANSFERASE"/>
    <property type="match status" value="1"/>
</dbReference>
<dbReference type="Pfam" id="PF01888">
    <property type="entry name" value="CbiD"/>
    <property type="match status" value="1"/>
</dbReference>
<dbReference type="PIRSF" id="PIRSF026782">
    <property type="entry name" value="CbiD"/>
    <property type="match status" value="1"/>
</dbReference>
<dbReference type="SUPFAM" id="SSF111342">
    <property type="entry name" value="CbiD-like"/>
    <property type="match status" value="1"/>
</dbReference>
<name>CBID_SALTI</name>
<sequence>MSELSFDAPVWRHGKALRKGYTTGSCATAAAKVAELMVLRQHLIHQVSIVTPSGVTLCLNVESPHIEGQQAIAAIRKDGGDDVDATHGMLIFARVTLNDSGEITLTGGEGIGTVTRKGVGLPLGSAAINRTPRHTIESAVREAIGPARGADVEIFAPEGEVRAQKTYNSRLGILGGISIIGTTGIVTPMSEESWKRSLSLELEIKRASGLTRVILVPGNHGERFVREQMGVDTQAVVTMSNFVGYMIEEAVRLGFCQIVLVGHPGKLIKIAAGIFHTHSHIADARMETLVAHLALLGAPLELLTLVGDCDTTEAAMEHIEAYGFGHIYNHLARRICLRVMQMLRFTKTPPVCDAILFSFDNHILGSNRPVDEIAKELQC</sequence>
<accession>Q8Z5M8</accession>
<keyword id="KW-0169">Cobalamin biosynthesis</keyword>
<keyword id="KW-0489">Methyltransferase</keyword>
<keyword id="KW-0949">S-adenosyl-L-methionine</keyword>
<keyword id="KW-0808">Transferase</keyword>
<reference key="1">
    <citation type="journal article" date="2001" name="Nature">
        <title>Complete genome sequence of a multiple drug resistant Salmonella enterica serovar Typhi CT18.</title>
        <authorList>
            <person name="Parkhill J."/>
            <person name="Dougan G."/>
            <person name="James K.D."/>
            <person name="Thomson N.R."/>
            <person name="Pickard D."/>
            <person name="Wain J."/>
            <person name="Churcher C.M."/>
            <person name="Mungall K.L."/>
            <person name="Bentley S.D."/>
            <person name="Holden M.T.G."/>
            <person name="Sebaihia M."/>
            <person name="Baker S."/>
            <person name="Basham D."/>
            <person name="Brooks K."/>
            <person name="Chillingworth T."/>
            <person name="Connerton P."/>
            <person name="Cronin A."/>
            <person name="Davis P."/>
            <person name="Davies R.M."/>
            <person name="Dowd L."/>
            <person name="White N."/>
            <person name="Farrar J."/>
            <person name="Feltwell T."/>
            <person name="Hamlin N."/>
            <person name="Haque A."/>
            <person name="Hien T.T."/>
            <person name="Holroyd S."/>
            <person name="Jagels K."/>
            <person name="Krogh A."/>
            <person name="Larsen T.S."/>
            <person name="Leather S."/>
            <person name="Moule S."/>
            <person name="O'Gaora P."/>
            <person name="Parry C."/>
            <person name="Quail M.A."/>
            <person name="Rutherford K.M."/>
            <person name="Simmonds M."/>
            <person name="Skelton J."/>
            <person name="Stevens K."/>
            <person name="Whitehead S."/>
            <person name="Barrell B.G."/>
        </authorList>
    </citation>
    <scope>NUCLEOTIDE SEQUENCE [LARGE SCALE GENOMIC DNA]</scope>
    <source>
        <strain>CT18</strain>
    </source>
</reference>
<reference key="2">
    <citation type="journal article" date="2003" name="J. Bacteriol.">
        <title>Comparative genomics of Salmonella enterica serovar Typhi strains Ty2 and CT18.</title>
        <authorList>
            <person name="Deng W."/>
            <person name="Liou S.-R."/>
            <person name="Plunkett G. III"/>
            <person name="Mayhew G.F."/>
            <person name="Rose D.J."/>
            <person name="Burland V."/>
            <person name="Kodoyianni V."/>
            <person name="Schwartz D.C."/>
            <person name="Blattner F.R."/>
        </authorList>
    </citation>
    <scope>NUCLEOTIDE SEQUENCE [LARGE SCALE GENOMIC DNA]</scope>
    <source>
        <strain>ATCC 700931 / Ty2</strain>
    </source>
</reference>
<protein>
    <recommendedName>
        <fullName evidence="1">Cobalt-precorrin-5B C(1)-methyltransferase</fullName>
        <ecNumber evidence="1">2.1.1.195</ecNumber>
    </recommendedName>
    <alternativeName>
        <fullName evidence="1">Cobalt-precorrin-6A synthase</fullName>
    </alternativeName>
</protein>
<organism>
    <name type="scientific">Salmonella typhi</name>
    <dbReference type="NCBI Taxonomy" id="90370"/>
    <lineage>
        <taxon>Bacteria</taxon>
        <taxon>Pseudomonadati</taxon>
        <taxon>Pseudomonadota</taxon>
        <taxon>Gammaproteobacteria</taxon>
        <taxon>Enterobacterales</taxon>
        <taxon>Enterobacteriaceae</taxon>
        <taxon>Salmonella</taxon>
    </lineage>
</organism>
<comment type="function">
    <text evidence="1">Catalyzes the methylation of C-1 in cobalt-precorrin-5B to form cobalt-precorrin-6A.</text>
</comment>
<comment type="catalytic activity">
    <reaction evidence="1">
        <text>Co-precorrin-5B + S-adenosyl-L-methionine = Co-precorrin-6A + S-adenosyl-L-homocysteine</text>
        <dbReference type="Rhea" id="RHEA:26285"/>
        <dbReference type="ChEBI" id="CHEBI:57856"/>
        <dbReference type="ChEBI" id="CHEBI:59789"/>
        <dbReference type="ChEBI" id="CHEBI:60063"/>
        <dbReference type="ChEBI" id="CHEBI:60064"/>
        <dbReference type="EC" id="2.1.1.195"/>
    </reaction>
</comment>
<comment type="pathway">
    <text evidence="1">Cofactor biosynthesis; adenosylcobalamin biosynthesis; cob(II)yrinate a,c-diamide from sirohydrochlorin (anaerobic route): step 6/10.</text>
</comment>
<comment type="similarity">
    <text evidence="1">Belongs to the CbiD family.</text>
</comment>
<evidence type="ECO:0000255" key="1">
    <source>
        <dbReference type="HAMAP-Rule" id="MF_00787"/>
    </source>
</evidence>
<proteinExistence type="inferred from homology"/>
<gene>
    <name evidence="1" type="primary">cbiD</name>
    <name type="ordered locus">STY2237</name>
    <name type="ordered locus">t0842</name>
</gene>
<feature type="chain" id="PRO_0000141683" description="Cobalt-precorrin-5B C(1)-methyltransferase">
    <location>
        <begin position="1"/>
        <end position="379"/>
    </location>
</feature>